<organism>
    <name type="scientific">Rattus norvegicus</name>
    <name type="common">Rat</name>
    <dbReference type="NCBI Taxonomy" id="10116"/>
    <lineage>
        <taxon>Eukaryota</taxon>
        <taxon>Metazoa</taxon>
        <taxon>Chordata</taxon>
        <taxon>Craniata</taxon>
        <taxon>Vertebrata</taxon>
        <taxon>Euteleostomi</taxon>
        <taxon>Mammalia</taxon>
        <taxon>Eutheria</taxon>
        <taxon>Euarchontoglires</taxon>
        <taxon>Glires</taxon>
        <taxon>Rodentia</taxon>
        <taxon>Myomorpha</taxon>
        <taxon>Muroidea</taxon>
        <taxon>Muridae</taxon>
        <taxon>Murinae</taxon>
        <taxon>Rattus</taxon>
    </lineage>
</organism>
<protein>
    <recommendedName>
        <fullName>Serine protease 57</fullName>
        <ecNumber evidence="1">3.4.21.-</ecNumber>
    </recommendedName>
    <alternativeName>
        <fullName>Complement factor D-like protein</fullName>
    </alternativeName>
    <alternativeName>
        <fullName evidence="1">Neutrophil serine protease 4</fullName>
        <shortName evidence="1">NSP4</shortName>
    </alternativeName>
    <alternativeName>
        <fullName>Serine protease 1-like protein 1</fullName>
    </alternativeName>
</protein>
<comment type="function">
    <text evidence="1">Serine protease that cleaves preferentially after Arg residues. Can also cleave after citrulline (deimidated arginine) and methylarginine residues.</text>
</comment>
<comment type="subcellular location">
    <subcellularLocation>
        <location evidence="1">Cytoplasmic granule lumen</location>
    </subcellularLocation>
    <subcellularLocation>
        <location evidence="1">Secreted</location>
    </subcellularLocation>
    <text evidence="1">Stored in cytoplasmic granules and secreted as active enzyme in response to stimulation of neutrophils.</text>
</comment>
<comment type="PTM">
    <text evidence="1">After cleavage of the signal peptide, the N-terminus is probably further processed by CTSC. Processing by CTSC is probably required for accumulation in cytoplasmic granules; in the absence of CTSC the protein does not accumulate.</text>
</comment>
<comment type="PTM">
    <text evidence="1">N-glycosylated.</text>
</comment>
<comment type="similarity">
    <text evidence="3">Belongs to the peptidase S1 family.</text>
</comment>
<keyword id="KW-1015">Disulfide bond</keyword>
<keyword id="KW-0325">Glycoprotein</keyword>
<keyword id="KW-0358">Heparin-binding</keyword>
<keyword id="KW-0378">Hydrolase</keyword>
<keyword id="KW-0645">Protease</keyword>
<keyword id="KW-1185">Reference proteome</keyword>
<keyword id="KW-0964">Secreted</keyword>
<keyword id="KW-0720">Serine protease</keyword>
<keyword id="KW-0732">Signal</keyword>
<dbReference type="EC" id="3.4.21.-" evidence="1"/>
<dbReference type="EMBL" id="AABR03056948">
    <property type="status" value="NOT_ANNOTATED_CDS"/>
    <property type="molecule type" value="Genomic_DNA"/>
</dbReference>
<dbReference type="EMBL" id="BN000334">
    <property type="protein sequence ID" value="CAE48389.1"/>
    <property type="molecule type" value="mRNA"/>
</dbReference>
<dbReference type="RefSeq" id="NP_001003956.1">
    <property type="nucleotide sequence ID" value="NM_001003956.1"/>
</dbReference>
<dbReference type="RefSeq" id="XP_006241041.1">
    <property type="nucleotide sequence ID" value="XM_006240979.5"/>
</dbReference>
<dbReference type="RefSeq" id="XP_063120162.1">
    <property type="nucleotide sequence ID" value="XM_063264092.1"/>
</dbReference>
<dbReference type="SMR" id="Q6IE59"/>
<dbReference type="FunCoup" id="Q6IE59">
    <property type="interactions" value="43"/>
</dbReference>
<dbReference type="STRING" id="10116.ENSRNOP00000031690"/>
<dbReference type="MEROPS" id="S01.368"/>
<dbReference type="GlyCosmos" id="Q6IE59">
    <property type="glycosylation" value="1 site, No reported glycans"/>
</dbReference>
<dbReference type="GlyGen" id="Q6IE59">
    <property type="glycosylation" value="2 sites"/>
</dbReference>
<dbReference type="PaxDb" id="10116-ENSRNOP00000031690"/>
<dbReference type="GeneID" id="408241"/>
<dbReference type="KEGG" id="rno:408241"/>
<dbReference type="UCSC" id="RGD:1303330">
    <property type="organism name" value="rat"/>
</dbReference>
<dbReference type="AGR" id="RGD:1303330"/>
<dbReference type="CTD" id="400668"/>
<dbReference type="RGD" id="1303330">
    <property type="gene designation" value="Prss57"/>
</dbReference>
<dbReference type="VEuPathDB" id="HostDB:ENSRNOG00000025293"/>
<dbReference type="eggNOG" id="KOG3627">
    <property type="taxonomic scope" value="Eukaryota"/>
</dbReference>
<dbReference type="HOGENOM" id="CLU_006842_1_0_1"/>
<dbReference type="InParanoid" id="Q6IE59"/>
<dbReference type="PhylomeDB" id="Q6IE59"/>
<dbReference type="TreeFam" id="TF333630"/>
<dbReference type="PRO" id="PR:Q6IE59"/>
<dbReference type="Proteomes" id="UP000002494">
    <property type="component" value="Chromosome 7"/>
</dbReference>
<dbReference type="Bgee" id="ENSRNOG00000025293">
    <property type="expression patterns" value="Expressed in thymus"/>
</dbReference>
<dbReference type="GO" id="GO:0035578">
    <property type="term" value="C:azurophil granule lumen"/>
    <property type="evidence" value="ECO:0000250"/>
    <property type="project" value="UniProtKB"/>
</dbReference>
<dbReference type="GO" id="GO:0005615">
    <property type="term" value="C:extracellular space"/>
    <property type="evidence" value="ECO:0000250"/>
    <property type="project" value="UniProtKB"/>
</dbReference>
<dbReference type="GO" id="GO:0008201">
    <property type="term" value="F:heparin binding"/>
    <property type="evidence" value="ECO:0000250"/>
    <property type="project" value="UniProtKB"/>
</dbReference>
<dbReference type="GO" id="GO:0004252">
    <property type="term" value="F:serine-type endopeptidase activity"/>
    <property type="evidence" value="ECO:0000318"/>
    <property type="project" value="GO_Central"/>
</dbReference>
<dbReference type="GO" id="GO:0008236">
    <property type="term" value="F:serine-type peptidase activity"/>
    <property type="evidence" value="ECO:0000250"/>
    <property type="project" value="UniProtKB"/>
</dbReference>
<dbReference type="GO" id="GO:0051604">
    <property type="term" value="P:protein maturation"/>
    <property type="evidence" value="ECO:0000318"/>
    <property type="project" value="GO_Central"/>
</dbReference>
<dbReference type="GO" id="GO:0006508">
    <property type="term" value="P:proteolysis"/>
    <property type="evidence" value="ECO:0000250"/>
    <property type="project" value="UniProtKB"/>
</dbReference>
<dbReference type="CDD" id="cd00190">
    <property type="entry name" value="Tryp_SPc"/>
    <property type="match status" value="1"/>
</dbReference>
<dbReference type="FunFam" id="2.40.10.10:FF:000052">
    <property type="entry name" value="Neutrophil elastase"/>
    <property type="match status" value="1"/>
</dbReference>
<dbReference type="FunFam" id="2.40.10.10:FF:000068">
    <property type="entry name" value="transmembrane protease serine 2"/>
    <property type="match status" value="1"/>
</dbReference>
<dbReference type="Gene3D" id="2.40.10.10">
    <property type="entry name" value="Trypsin-like serine proteases"/>
    <property type="match status" value="2"/>
</dbReference>
<dbReference type="InterPro" id="IPR009003">
    <property type="entry name" value="Peptidase_S1_PA"/>
</dbReference>
<dbReference type="InterPro" id="IPR043504">
    <property type="entry name" value="Peptidase_S1_PA_chymotrypsin"/>
</dbReference>
<dbReference type="InterPro" id="IPR001314">
    <property type="entry name" value="Peptidase_S1A"/>
</dbReference>
<dbReference type="InterPro" id="IPR001254">
    <property type="entry name" value="Trypsin_dom"/>
</dbReference>
<dbReference type="InterPro" id="IPR018114">
    <property type="entry name" value="TRYPSIN_HIS"/>
</dbReference>
<dbReference type="PANTHER" id="PTHR24271">
    <property type="entry name" value="KALLIKREIN-RELATED"/>
    <property type="match status" value="1"/>
</dbReference>
<dbReference type="PANTHER" id="PTHR24271:SF55">
    <property type="entry name" value="SERINE PROTEASE 57"/>
    <property type="match status" value="1"/>
</dbReference>
<dbReference type="Pfam" id="PF00089">
    <property type="entry name" value="Trypsin"/>
    <property type="match status" value="1"/>
</dbReference>
<dbReference type="PRINTS" id="PR00722">
    <property type="entry name" value="CHYMOTRYPSIN"/>
</dbReference>
<dbReference type="SMART" id="SM00020">
    <property type="entry name" value="Tryp_SPc"/>
    <property type="match status" value="1"/>
</dbReference>
<dbReference type="SUPFAM" id="SSF50494">
    <property type="entry name" value="Trypsin-like serine proteases"/>
    <property type="match status" value="1"/>
</dbReference>
<dbReference type="PROSITE" id="PS50240">
    <property type="entry name" value="TRYPSIN_DOM"/>
    <property type="match status" value="1"/>
</dbReference>
<dbReference type="PROSITE" id="PS00134">
    <property type="entry name" value="TRYPSIN_HIS"/>
    <property type="match status" value="1"/>
</dbReference>
<accession>Q6IE59</accession>
<gene>
    <name type="primary">Prss57</name>
    <name type="synonym">Df2</name>
    <name type="synonym">Prssl1</name>
</gene>
<proteinExistence type="evidence at transcript level"/>
<reference key="1">
    <citation type="journal article" date="2004" name="Nature">
        <title>Genome sequence of the Brown Norway rat yields insights into mammalian evolution.</title>
        <authorList>
            <person name="Gibbs R.A."/>
            <person name="Weinstock G.M."/>
            <person name="Metzker M.L."/>
            <person name="Muzny D.M."/>
            <person name="Sodergren E.J."/>
            <person name="Scherer S."/>
            <person name="Scott G."/>
            <person name="Steffen D."/>
            <person name="Worley K.C."/>
            <person name="Burch P.E."/>
            <person name="Okwuonu G."/>
            <person name="Hines S."/>
            <person name="Lewis L."/>
            <person name="Deramo C."/>
            <person name="Delgado O."/>
            <person name="Dugan-Rocha S."/>
            <person name="Miner G."/>
            <person name="Morgan M."/>
            <person name="Hawes A."/>
            <person name="Gill R."/>
            <person name="Holt R.A."/>
            <person name="Adams M.D."/>
            <person name="Amanatides P.G."/>
            <person name="Baden-Tillson H."/>
            <person name="Barnstead M."/>
            <person name="Chin S."/>
            <person name="Evans C.A."/>
            <person name="Ferriera S."/>
            <person name="Fosler C."/>
            <person name="Glodek A."/>
            <person name="Gu Z."/>
            <person name="Jennings D."/>
            <person name="Kraft C.L."/>
            <person name="Nguyen T."/>
            <person name="Pfannkoch C.M."/>
            <person name="Sitter C."/>
            <person name="Sutton G.G."/>
            <person name="Venter J.C."/>
            <person name="Woodage T."/>
            <person name="Smith D."/>
            <person name="Lee H.-M."/>
            <person name="Gustafson E."/>
            <person name="Cahill P."/>
            <person name="Kana A."/>
            <person name="Doucette-Stamm L."/>
            <person name="Weinstock K."/>
            <person name="Fechtel K."/>
            <person name="Weiss R.B."/>
            <person name="Dunn D.M."/>
            <person name="Green E.D."/>
            <person name="Blakesley R.W."/>
            <person name="Bouffard G.G."/>
            <person name="De Jong P.J."/>
            <person name="Osoegawa K."/>
            <person name="Zhu B."/>
            <person name="Marra M."/>
            <person name="Schein J."/>
            <person name="Bosdet I."/>
            <person name="Fjell C."/>
            <person name="Jones S."/>
            <person name="Krzywinski M."/>
            <person name="Mathewson C."/>
            <person name="Siddiqui A."/>
            <person name="Wye N."/>
            <person name="McPherson J."/>
            <person name="Zhao S."/>
            <person name="Fraser C.M."/>
            <person name="Shetty J."/>
            <person name="Shatsman S."/>
            <person name="Geer K."/>
            <person name="Chen Y."/>
            <person name="Abramzon S."/>
            <person name="Nierman W.C."/>
            <person name="Havlak P.H."/>
            <person name="Chen R."/>
            <person name="Durbin K.J."/>
            <person name="Egan A."/>
            <person name="Ren Y."/>
            <person name="Song X.-Z."/>
            <person name="Li B."/>
            <person name="Liu Y."/>
            <person name="Qin X."/>
            <person name="Cawley S."/>
            <person name="Cooney A.J."/>
            <person name="D'Souza L.M."/>
            <person name="Martin K."/>
            <person name="Wu J.Q."/>
            <person name="Gonzalez-Garay M.L."/>
            <person name="Jackson A.R."/>
            <person name="Kalafus K.J."/>
            <person name="McLeod M.P."/>
            <person name="Milosavljevic A."/>
            <person name="Virk D."/>
            <person name="Volkov A."/>
            <person name="Wheeler D.A."/>
            <person name="Zhang Z."/>
            <person name="Bailey J.A."/>
            <person name="Eichler E.E."/>
            <person name="Tuzun E."/>
            <person name="Birney E."/>
            <person name="Mongin E."/>
            <person name="Ureta-Vidal A."/>
            <person name="Woodwark C."/>
            <person name="Zdobnov E."/>
            <person name="Bork P."/>
            <person name="Suyama M."/>
            <person name="Torrents D."/>
            <person name="Alexandersson M."/>
            <person name="Trask B.J."/>
            <person name="Young J.M."/>
            <person name="Huang H."/>
            <person name="Wang H."/>
            <person name="Xing H."/>
            <person name="Daniels S."/>
            <person name="Gietzen D."/>
            <person name="Schmidt J."/>
            <person name="Stevens K."/>
            <person name="Vitt U."/>
            <person name="Wingrove J."/>
            <person name="Camara F."/>
            <person name="Mar Alba M."/>
            <person name="Abril J.F."/>
            <person name="Guigo R."/>
            <person name="Smit A."/>
            <person name="Dubchak I."/>
            <person name="Rubin E.M."/>
            <person name="Couronne O."/>
            <person name="Poliakov A."/>
            <person name="Huebner N."/>
            <person name="Ganten D."/>
            <person name="Goesele C."/>
            <person name="Hummel O."/>
            <person name="Kreitler T."/>
            <person name="Lee Y.-A."/>
            <person name="Monti J."/>
            <person name="Schulz H."/>
            <person name="Zimdahl H."/>
            <person name="Himmelbauer H."/>
            <person name="Lehrach H."/>
            <person name="Jacob H.J."/>
            <person name="Bromberg S."/>
            <person name="Gullings-Handley J."/>
            <person name="Jensen-Seaman M.I."/>
            <person name="Kwitek A.E."/>
            <person name="Lazar J."/>
            <person name="Pasko D."/>
            <person name="Tonellato P.J."/>
            <person name="Twigger S."/>
            <person name="Ponting C.P."/>
            <person name="Duarte J.M."/>
            <person name="Rice S."/>
            <person name="Goodstadt L."/>
            <person name="Beatson S.A."/>
            <person name="Emes R.D."/>
            <person name="Winter E.E."/>
            <person name="Webber C."/>
            <person name="Brandt P."/>
            <person name="Nyakatura G."/>
            <person name="Adetobi M."/>
            <person name="Chiaromonte F."/>
            <person name="Elnitski L."/>
            <person name="Eswara P."/>
            <person name="Hardison R.C."/>
            <person name="Hou M."/>
            <person name="Kolbe D."/>
            <person name="Makova K."/>
            <person name="Miller W."/>
            <person name="Nekrutenko A."/>
            <person name="Riemer C."/>
            <person name="Schwartz S."/>
            <person name="Taylor J."/>
            <person name="Yang S."/>
            <person name="Zhang Y."/>
            <person name="Lindpaintner K."/>
            <person name="Andrews T.D."/>
            <person name="Caccamo M."/>
            <person name="Clamp M."/>
            <person name="Clarke L."/>
            <person name="Curwen V."/>
            <person name="Durbin R.M."/>
            <person name="Eyras E."/>
            <person name="Searle S.M."/>
            <person name="Cooper G.M."/>
            <person name="Batzoglou S."/>
            <person name="Brudno M."/>
            <person name="Sidow A."/>
            <person name="Stone E.A."/>
            <person name="Payseur B.A."/>
            <person name="Bourque G."/>
            <person name="Lopez-Otin C."/>
            <person name="Puente X.S."/>
            <person name="Chakrabarti K."/>
            <person name="Chatterji S."/>
            <person name="Dewey C."/>
            <person name="Pachter L."/>
            <person name="Bray N."/>
            <person name="Yap V.B."/>
            <person name="Caspi A."/>
            <person name="Tesler G."/>
            <person name="Pevzner P.A."/>
            <person name="Haussler D."/>
            <person name="Roskin K.M."/>
            <person name="Baertsch R."/>
            <person name="Clawson H."/>
            <person name="Furey T.S."/>
            <person name="Hinrichs A.S."/>
            <person name="Karolchik D."/>
            <person name="Kent W.J."/>
            <person name="Rosenbloom K.R."/>
            <person name="Trumbower H."/>
            <person name="Weirauch M."/>
            <person name="Cooper D.N."/>
            <person name="Stenson P.D."/>
            <person name="Ma B."/>
            <person name="Brent M."/>
            <person name="Arumugam M."/>
            <person name="Shteynberg D."/>
            <person name="Copley R.R."/>
            <person name="Taylor M.S."/>
            <person name="Riethman H."/>
            <person name="Mudunuri U."/>
            <person name="Peterson J."/>
            <person name="Guyer M."/>
            <person name="Felsenfeld A."/>
            <person name="Old S."/>
            <person name="Mockrin S."/>
            <person name="Collins F.S."/>
        </authorList>
    </citation>
    <scope>NUCLEOTIDE SEQUENCE [LARGE SCALE GENOMIC DNA]</scope>
    <source>
        <strain>Brown Norway</strain>
    </source>
</reference>
<reference key="2">
    <citation type="journal article" date="2004" name="Genome Res.">
        <title>A genomic analysis of rat proteases and protease inhibitors.</title>
        <authorList>
            <person name="Puente X.S."/>
            <person name="Lopez-Otin C."/>
        </authorList>
    </citation>
    <scope>IDENTIFICATION</scope>
    <source>
        <strain>Sprague-Dawley</strain>
    </source>
</reference>
<name>PRS57_RAT</name>
<sequence>MVPGTGGGRDCLTLVVATALTQLLWLPGCCGSHIVGGHEVKPHARPYMASVNFEGHHHCGGFLFHAHWVLSAAHCFSDRDPSTGLVVLGAHALLTPEPTQQVFGIAAVVSHPDFEPTTQANDICLLRLNGSAVLGPAVRLLRLPRRGAKPPVAGTRCRVSGWGSVSDFEEPPPGLMEVEVRILDLSVCNSSWQGQLSPAMLCTHSGDRRRRGFCSADSGGPLVCGNRAHGLVSFSGLWCGDPKTPDVYTQVSAFVSWIWDVVRASPTPGSMGCSLRAV</sequence>
<feature type="signal peptide" evidence="2">
    <location>
        <begin position="1"/>
        <end position="31"/>
    </location>
</feature>
<feature type="chain" id="PRO_0000295855" description="Serine protease 57">
    <location>
        <begin position="32"/>
        <end position="278"/>
    </location>
</feature>
<feature type="domain" description="Peptidase S1" evidence="3">
    <location>
        <begin position="34"/>
        <end position="263"/>
    </location>
</feature>
<feature type="active site" description="Charge relay system" evidence="1">
    <location>
        <position position="74"/>
    </location>
</feature>
<feature type="active site" description="Charge relay system" evidence="1">
    <location>
        <position position="122"/>
    </location>
</feature>
<feature type="active site" description="Charge relay system" evidence="1">
    <location>
        <position position="218"/>
    </location>
</feature>
<feature type="glycosylation site" description="N-linked (GlcNAc...) asparagine" evidence="2">
    <location>
        <position position="129"/>
    </location>
</feature>
<feature type="disulfide bond" evidence="3">
    <location>
        <begin position="59"/>
        <end position="75"/>
    </location>
</feature>
<feature type="disulfide bond" evidence="3">
    <location>
        <begin position="157"/>
        <end position="224"/>
    </location>
</feature>
<feature type="disulfide bond" evidence="3">
    <location>
        <begin position="188"/>
        <end position="202"/>
    </location>
</feature>
<feature type="disulfide bond" evidence="3">
    <location>
        <begin position="214"/>
        <end position="239"/>
    </location>
</feature>
<evidence type="ECO:0000250" key="1">
    <source>
        <dbReference type="UniProtKB" id="Q6UWY2"/>
    </source>
</evidence>
<evidence type="ECO:0000255" key="2"/>
<evidence type="ECO:0000255" key="3">
    <source>
        <dbReference type="PROSITE-ProRule" id="PRU00274"/>
    </source>
</evidence>